<name>PLYA_ASPFC</name>
<proteinExistence type="inferred from homology"/>
<organism>
    <name type="scientific">Aspergillus fumigatus (strain CBS 144.89 / FGSC A1163 / CEA10)</name>
    <name type="common">Neosartorya fumigata</name>
    <dbReference type="NCBI Taxonomy" id="451804"/>
    <lineage>
        <taxon>Eukaryota</taxon>
        <taxon>Fungi</taxon>
        <taxon>Dikarya</taxon>
        <taxon>Ascomycota</taxon>
        <taxon>Pezizomycotina</taxon>
        <taxon>Eurotiomycetes</taxon>
        <taxon>Eurotiomycetidae</taxon>
        <taxon>Eurotiales</taxon>
        <taxon>Aspergillaceae</taxon>
        <taxon>Aspergillus</taxon>
        <taxon>Aspergillus subgen. Fumigati</taxon>
    </lineage>
</organism>
<evidence type="ECO:0000250" key="1"/>
<evidence type="ECO:0000255" key="2"/>
<evidence type="ECO:0000305" key="3"/>
<feature type="signal peptide" evidence="2">
    <location>
        <begin position="1"/>
        <end position="18"/>
    </location>
</feature>
<feature type="chain" id="PRO_0000394559" description="Probable pectate lyase A">
    <location>
        <begin position="19"/>
        <end position="321"/>
    </location>
</feature>
<feature type="active site" evidence="2">
    <location>
        <position position="220"/>
    </location>
</feature>
<feature type="binding site" evidence="1">
    <location>
        <position position="134"/>
    </location>
    <ligand>
        <name>Ca(2+)</name>
        <dbReference type="ChEBI" id="CHEBI:29108"/>
    </ligand>
</feature>
<feature type="binding site" evidence="1">
    <location>
        <position position="163"/>
    </location>
    <ligand>
        <name>Ca(2+)</name>
        <dbReference type="ChEBI" id="CHEBI:29108"/>
    </ligand>
</feature>
<feature type="binding site" evidence="1">
    <location>
        <position position="167"/>
    </location>
    <ligand>
        <name>Ca(2+)</name>
        <dbReference type="ChEBI" id="CHEBI:29108"/>
    </ligand>
</feature>
<feature type="glycosylation site" description="N-linked (GlcNAc...) asparagine" evidence="2">
    <location>
        <position position="93"/>
    </location>
</feature>
<feature type="glycosylation site" description="N-linked (GlcNAc...) asparagine" evidence="2">
    <location>
        <position position="238"/>
    </location>
</feature>
<gene>
    <name type="primary">plyA</name>
    <name type="ORF">AFUB_017840</name>
</gene>
<keyword id="KW-0106">Calcium</keyword>
<keyword id="KW-0119">Carbohydrate metabolism</keyword>
<keyword id="KW-0961">Cell wall biogenesis/degradation</keyword>
<keyword id="KW-0325">Glycoprotein</keyword>
<keyword id="KW-0456">Lyase</keyword>
<keyword id="KW-0479">Metal-binding</keyword>
<keyword id="KW-0624">Polysaccharide degradation</keyword>
<keyword id="KW-0964">Secreted</keyword>
<keyword id="KW-0732">Signal</keyword>
<protein>
    <recommendedName>
        <fullName>Probable pectate lyase A</fullName>
        <ecNumber>4.2.2.2</ecNumber>
    </recommendedName>
</protein>
<sequence>MKFVATLIACGLSGLALAAPTATVDSLGKRAADDAAFGYASLNGGTTGGAGGTTTTVSSYAAFTAAVSSDAKKVVYVSGPIKQSAKQVKVGSNTSIIGKDSTAVLEGFGLLVKEKSNVIIRNLGVKKVLAENGDAIGIQYSNNVWVDHVDVSSDRDHDKDYYDGLIDVTHAADYVTISNSYIHDHWKASLVGHSDNNGDEDKGHLRVTYANNYWSNINSRAPSLRFGTGHIYNSYFENVSDGINTRDGAQVLVESNQFVGSSKALYSTDDGYAVERDNDFGGAKNTALQGTLTTVPYSYSLLGSSKVKSAVVGVAGQTLKF</sequence>
<reference key="1">
    <citation type="journal article" date="2008" name="PLoS Genet.">
        <title>Genomic islands in the pathogenic filamentous fungus Aspergillus fumigatus.</title>
        <authorList>
            <person name="Fedorova N.D."/>
            <person name="Khaldi N."/>
            <person name="Joardar V.S."/>
            <person name="Maiti R."/>
            <person name="Amedeo P."/>
            <person name="Anderson M.J."/>
            <person name="Crabtree J."/>
            <person name="Silva J.C."/>
            <person name="Badger J.H."/>
            <person name="Albarraq A."/>
            <person name="Angiuoli S."/>
            <person name="Bussey H."/>
            <person name="Bowyer P."/>
            <person name="Cotty P.J."/>
            <person name="Dyer P.S."/>
            <person name="Egan A."/>
            <person name="Galens K."/>
            <person name="Fraser-Liggett C.M."/>
            <person name="Haas B.J."/>
            <person name="Inman J.M."/>
            <person name="Kent R."/>
            <person name="Lemieux S."/>
            <person name="Malavazi I."/>
            <person name="Orvis J."/>
            <person name="Roemer T."/>
            <person name="Ronning C.M."/>
            <person name="Sundaram J.P."/>
            <person name="Sutton G."/>
            <person name="Turner G."/>
            <person name="Venter J.C."/>
            <person name="White O.R."/>
            <person name="Whitty B.R."/>
            <person name="Youngman P."/>
            <person name="Wolfe K.H."/>
            <person name="Goldman G.H."/>
            <person name="Wortman J.R."/>
            <person name="Jiang B."/>
            <person name="Denning D.W."/>
            <person name="Nierman W.C."/>
        </authorList>
    </citation>
    <scope>NUCLEOTIDE SEQUENCE [LARGE SCALE GENOMIC DNA]</scope>
    <source>
        <strain>CBS 144.89 / FGSC A1163 / CEA10</strain>
    </source>
</reference>
<dbReference type="EC" id="4.2.2.2"/>
<dbReference type="EMBL" id="DS499595">
    <property type="protein sequence ID" value="EDP53741.1"/>
    <property type="molecule type" value="Genomic_DNA"/>
</dbReference>
<dbReference type="SMR" id="B0XT32"/>
<dbReference type="Allergome" id="8991">
    <property type="allergen name" value="Asp f PL"/>
</dbReference>
<dbReference type="GlyCosmos" id="B0XT32">
    <property type="glycosylation" value="2 sites, No reported glycans"/>
</dbReference>
<dbReference type="EnsemblFungi" id="EDP53741">
    <property type="protein sequence ID" value="EDP53741"/>
    <property type="gene ID" value="AFUB_017840"/>
</dbReference>
<dbReference type="VEuPathDB" id="FungiDB:AFUB_017840"/>
<dbReference type="HOGENOM" id="CLU_021894_1_0_1"/>
<dbReference type="OrthoDB" id="94287at5052"/>
<dbReference type="PhylomeDB" id="B0XT32"/>
<dbReference type="Proteomes" id="UP000001699">
    <property type="component" value="Unassembled WGS sequence"/>
</dbReference>
<dbReference type="GO" id="GO:0005576">
    <property type="term" value="C:extracellular region"/>
    <property type="evidence" value="ECO:0000250"/>
    <property type="project" value="UniProtKB"/>
</dbReference>
<dbReference type="GO" id="GO:0046872">
    <property type="term" value="F:metal ion binding"/>
    <property type="evidence" value="ECO:0007669"/>
    <property type="project" value="UniProtKB-KW"/>
</dbReference>
<dbReference type="GO" id="GO:0030570">
    <property type="term" value="F:pectate lyase activity"/>
    <property type="evidence" value="ECO:0000250"/>
    <property type="project" value="UniProtKB"/>
</dbReference>
<dbReference type="GO" id="GO:0071555">
    <property type="term" value="P:cell wall organization"/>
    <property type="evidence" value="ECO:0007669"/>
    <property type="project" value="UniProtKB-KW"/>
</dbReference>
<dbReference type="GO" id="GO:0045490">
    <property type="term" value="P:pectin catabolic process"/>
    <property type="evidence" value="ECO:0000250"/>
    <property type="project" value="UniProtKB"/>
</dbReference>
<dbReference type="FunFam" id="2.160.20.10:FF:000036">
    <property type="entry name" value="Pectate lyase A"/>
    <property type="match status" value="1"/>
</dbReference>
<dbReference type="Gene3D" id="2.160.20.10">
    <property type="entry name" value="Single-stranded right-handed beta-helix, Pectin lyase-like"/>
    <property type="match status" value="1"/>
</dbReference>
<dbReference type="InterPro" id="IPR002022">
    <property type="entry name" value="Pec_lyase"/>
</dbReference>
<dbReference type="InterPro" id="IPR012334">
    <property type="entry name" value="Pectin_lyas_fold"/>
</dbReference>
<dbReference type="InterPro" id="IPR011050">
    <property type="entry name" value="Pectin_lyase_fold/virulence"/>
</dbReference>
<dbReference type="InterPro" id="IPR045032">
    <property type="entry name" value="PEL"/>
</dbReference>
<dbReference type="PANTHER" id="PTHR31683">
    <property type="entry name" value="PECTATE LYASE 18-RELATED"/>
    <property type="match status" value="1"/>
</dbReference>
<dbReference type="PANTHER" id="PTHR31683:SF18">
    <property type="entry name" value="PECTATE LYASE 21-RELATED"/>
    <property type="match status" value="1"/>
</dbReference>
<dbReference type="Pfam" id="PF00544">
    <property type="entry name" value="Pectate_lyase_4"/>
    <property type="match status" value="1"/>
</dbReference>
<dbReference type="SMART" id="SM00656">
    <property type="entry name" value="Amb_all"/>
    <property type="match status" value="1"/>
</dbReference>
<dbReference type="SUPFAM" id="SSF51126">
    <property type="entry name" value="Pectin lyase-like"/>
    <property type="match status" value="1"/>
</dbReference>
<accession>B0XT32</accession>
<comment type="function">
    <text evidence="1">Pectinolytic enzyme consist of four classes of enzymes: pectin lyase, polygalacturonase, pectin methylesterase and rhamnogalacturonase. Among pectinolytic enzymes, pectin lyase is the most important in depolymerization of pectin, since it cleaves internal glycosidic bonds of highly methylated pectins. Favors pectate, the anion, over pectin, the methyl ester (By similarity).</text>
</comment>
<comment type="catalytic activity">
    <reaction>
        <text>Eliminative cleavage of (1-&gt;4)-alpha-D-galacturonan to give oligosaccharides with 4-deoxy-alpha-D-galact-4-enuronosyl groups at their non-reducing ends.</text>
        <dbReference type="EC" id="4.2.2.2"/>
    </reaction>
</comment>
<comment type="cofactor">
    <cofactor evidence="1">
        <name>Ca(2+)</name>
        <dbReference type="ChEBI" id="CHEBI:29108"/>
    </cofactor>
    <text evidence="1">Binds 1 Ca(2+) ion per subunit.</text>
</comment>
<comment type="subcellular location">
    <subcellularLocation>
        <location evidence="1">Secreted</location>
    </subcellularLocation>
</comment>
<comment type="similarity">
    <text evidence="3">Belongs to the polysaccharide lyase 1 family.</text>
</comment>